<proteinExistence type="evidence at protein level"/>
<comment type="function">
    <text evidence="2 3 4 6 8">Confers resistance to the different beta-lactams antibiotics (penicillin, cephalosporin and carbapenem) via the hydrolysis of the beta-lactam ring (PubMed:15588826, PubMed:17307979, PubMed:1856163, PubMed:19651913, PubMed:2327760). It is able to hydrolyze penicillin and imipenem, but is much less active against cephalothin, cefotaxime, meropenem and ceftazidime (PubMed:1856163, PubMed:2327760).</text>
</comment>
<comment type="catalytic activity">
    <reaction evidence="2 3 6 8">
        <text>a beta-lactam + H2O = a substituted beta-amino acid</text>
        <dbReference type="Rhea" id="RHEA:20401"/>
        <dbReference type="ChEBI" id="CHEBI:15377"/>
        <dbReference type="ChEBI" id="CHEBI:35627"/>
        <dbReference type="ChEBI" id="CHEBI:140347"/>
        <dbReference type="EC" id="3.5.2.6"/>
    </reaction>
</comment>
<comment type="cofactor">
    <cofactor evidence="2 3 5 6 7">
        <name>Zn(2+)</name>
        <dbReference type="ChEBI" id="CHEBI:29105"/>
    </cofactor>
    <text evidence="2 3 5 6 7">Binds 1 Zn(2+) ions per subunit.</text>
</comment>
<comment type="activity regulation">
    <text evidence="3 4 6 7 8">Competitively inhibited by mercaptophosphonate and pyridine carboxylate derivatives (PubMed:17307979, PubMed:20527888). Also inhibited by the binding of a second zinc ion and by chelating agents such as EDTA (PubMed:1856163, PubMed:19651913, PubMed:2327760).</text>
</comment>
<comment type="biophysicochemical properties">
    <kinetics>
        <KM evidence="8">0.8 uM for cefuroxime</KM>
        <KM evidence="8">9 uM for ceftazidime</KM>
        <KM evidence="8">15 uM for cefotaxime</KM>
        <KM evidence="8">19 uM for cloxacillin</KM>
        <KM evidence="8">28 uM for cephalothin</KM>
        <KM evidence="8">30 uM for imipenem</KM>
        <KM evidence="8">30.6 uM for nitrocefin</KM>
        <KM evidence="8">53.3 uM for aztreonam</KM>
        <KM evidence="3">63 uM for imipenem (at pH 9)</KM>
        <KM evidence="3">83 uM for imipenem (at pH 8)</KM>
        <KM evidence="3">120 uM for imipenem (at pH 7)</KM>
        <KM evidence="8">124 uM for penicillin G</KM>
        <KM evidence="2">166 uM for biapenem</KM>
        <KM evidence="2 6">340 uM for imipenem</KM>
        <KM evidence="2 6">1300 uM for nitrocefin</KM>
        <Vmax evidence="8">170.0 umol/min/mg enzyme with penicillin G as substrate</Vmax>
        <Vmax evidence="8">100.0 umol/min/mg enzyme with nitrocefin as substrate</Vmax>
        <Vmax evidence="8">68.5 umol/min/mg enzyme with imipenem as substrate</Vmax>
        <Vmax evidence="8">12.8 umol/min/mg enzyme with cefuroxime as substrate</Vmax>
        <Vmax evidence="8">3.2 umol/min/mg enzyme with aztreonam as substrate</Vmax>
        <Vmax evidence="8">1.8 umol/min/mg enzyme with cephalothin as substrate</Vmax>
        <Vmax evidence="8">1.1 umol/min/mg enzyme with cloxacillin as substrate</Vmax>
        <Vmax evidence="8">0.5 umol/min/mg enzyme with cefotaxime as substrate</Vmax>
        <Vmax evidence="8">0.3 umol/min/mg enzyme with ceftazidime as substrate</Vmax>
        <text evidence="2 3 6">kcat is 1200 sec(-1) for lactamase activity with imipenem as substrate (PubMed:15588826, PubMed:19651913). kcat is 300 sec(-1) for lactamase activity with biapenem as substrate (PubMed:15588826). kcat is 210 sec(-1) for lactamase activity with imipenem as substrate (at pH 7) (PubMed:17307979). kcat is 140 sec(-1) for lactamase activity with imipenem as substrate (at pH 8) (PubMed:17307979). kcat is 49 sec(-1) for lactamase activity with imipenem as substrate (at pH 9) (PubMed:17307979). kcat is 0.008 sec(-1) for lactamase activity with nitrocefin as substrate (PubMed:19651913).</text>
    </kinetics>
</comment>
<comment type="subunit">
    <text evidence="2 4 8">Monomer.</text>
</comment>
<comment type="subcellular location">
    <subcellularLocation>
        <location evidence="11">Periplasm</location>
    </subcellularLocation>
</comment>
<comment type="induction">
    <text evidence="8">By either cefoxitin or imipenem.</text>
</comment>
<comment type="similarity">
    <text evidence="10">Belongs to the metallo-beta-lactamase superfamily. Class-B beta-lactamase family.</text>
</comment>
<keyword id="KW-0002">3D-structure</keyword>
<keyword id="KW-0046">Antibiotic resistance</keyword>
<keyword id="KW-0378">Hydrolase</keyword>
<keyword id="KW-0479">Metal-binding</keyword>
<keyword id="KW-0574">Periplasm</keyword>
<keyword id="KW-0732">Signal</keyword>
<keyword id="KW-0862">Zinc</keyword>
<dbReference type="EC" id="3.5.2.6" evidence="2 3 6 8"/>
<dbReference type="EMBL" id="X57102">
    <property type="protein sequence ID" value="CAA40386.1"/>
    <property type="molecule type" value="Genomic_DNA"/>
</dbReference>
<dbReference type="PIR" id="S17287">
    <property type="entry name" value="S17287"/>
</dbReference>
<dbReference type="RefSeq" id="WP_063844282.1">
    <property type="nucleotide sequence ID" value="NG_047667.1"/>
</dbReference>
<dbReference type="PDB" id="1X8G">
    <property type="method" value="X-ray"/>
    <property type="resolution" value="1.70 A"/>
    <property type="chains" value="A=28-254"/>
</dbReference>
<dbReference type="PDB" id="1X8H">
    <property type="method" value="X-ray"/>
    <property type="resolution" value="1.60 A"/>
    <property type="chains" value="A=28-254"/>
</dbReference>
<dbReference type="PDB" id="1X8I">
    <property type="method" value="X-ray"/>
    <property type="resolution" value="1.90 A"/>
    <property type="chains" value="A=28-254"/>
</dbReference>
<dbReference type="PDB" id="2GKL">
    <property type="method" value="X-ray"/>
    <property type="resolution" value="1.86 A"/>
    <property type="chains" value="A=28-254"/>
</dbReference>
<dbReference type="PDB" id="2QDS">
    <property type="method" value="X-ray"/>
    <property type="resolution" value="1.66 A"/>
    <property type="chains" value="A=28-254"/>
</dbReference>
<dbReference type="PDB" id="3F9O">
    <property type="method" value="X-ray"/>
    <property type="resolution" value="2.03 A"/>
    <property type="chains" value="A=28-254"/>
</dbReference>
<dbReference type="PDB" id="3FAI">
    <property type="method" value="X-ray"/>
    <property type="resolution" value="1.70 A"/>
    <property type="chains" value="A=28-254"/>
</dbReference>
<dbReference type="PDB" id="3IOF">
    <property type="method" value="X-ray"/>
    <property type="resolution" value="1.44 A"/>
    <property type="chains" value="A=28-254"/>
</dbReference>
<dbReference type="PDB" id="3IOG">
    <property type="method" value="X-ray"/>
    <property type="resolution" value="1.41 A"/>
    <property type="chains" value="A=28-254"/>
</dbReference>
<dbReference type="PDB" id="3SW3">
    <property type="method" value="X-ray"/>
    <property type="resolution" value="2.35 A"/>
    <property type="chains" value="A=28-254"/>
</dbReference>
<dbReference type="PDB" id="3T9M">
    <property type="method" value="X-ray"/>
    <property type="resolution" value="2.03 A"/>
    <property type="chains" value="A=28-254"/>
</dbReference>
<dbReference type="PDBsum" id="1X8G"/>
<dbReference type="PDBsum" id="1X8H"/>
<dbReference type="PDBsum" id="1X8I"/>
<dbReference type="PDBsum" id="2GKL"/>
<dbReference type="PDBsum" id="2QDS"/>
<dbReference type="PDBsum" id="3F9O"/>
<dbReference type="PDBsum" id="3FAI"/>
<dbReference type="PDBsum" id="3IOF"/>
<dbReference type="PDBsum" id="3IOG"/>
<dbReference type="PDBsum" id="3SW3"/>
<dbReference type="PDBsum" id="3T9M"/>
<dbReference type="SMR" id="P26918"/>
<dbReference type="BindingDB" id="P26918"/>
<dbReference type="ChEMBL" id="CHEMBL1169593"/>
<dbReference type="DrugBank" id="DB02032">
    <property type="generic name" value="Epicaptopril"/>
</dbReference>
<dbReference type="BRENDA" id="3.5.2.6">
    <property type="organism ID" value="164"/>
</dbReference>
<dbReference type="SABIO-RK" id="P26918"/>
<dbReference type="EvolutionaryTrace" id="P26918"/>
<dbReference type="GO" id="GO:0042597">
    <property type="term" value="C:periplasmic space"/>
    <property type="evidence" value="ECO:0007669"/>
    <property type="project" value="UniProtKB-SubCell"/>
</dbReference>
<dbReference type="GO" id="GO:0008800">
    <property type="term" value="F:beta-lactamase activity"/>
    <property type="evidence" value="ECO:0000314"/>
    <property type="project" value="UniProtKB"/>
</dbReference>
<dbReference type="GO" id="GO:0008270">
    <property type="term" value="F:zinc ion binding"/>
    <property type="evidence" value="ECO:0000314"/>
    <property type="project" value="UniProtKB"/>
</dbReference>
<dbReference type="GO" id="GO:0017001">
    <property type="term" value="P:antibiotic catabolic process"/>
    <property type="evidence" value="ECO:0000314"/>
    <property type="project" value="UniProtKB"/>
</dbReference>
<dbReference type="GO" id="GO:0046677">
    <property type="term" value="P:response to antibiotic"/>
    <property type="evidence" value="ECO:0007669"/>
    <property type="project" value="UniProtKB-KW"/>
</dbReference>
<dbReference type="CDD" id="cd16306">
    <property type="entry name" value="CphA_ImiS-like_MBL-B2"/>
    <property type="match status" value="1"/>
</dbReference>
<dbReference type="FunFam" id="3.60.15.10:FF:000147">
    <property type="entry name" value="Metallo-beta-lactamase type 2"/>
    <property type="match status" value="1"/>
</dbReference>
<dbReference type="Gene3D" id="3.60.15.10">
    <property type="entry name" value="Ribonuclease Z/Hydroxyacylglutathione hydrolase-like"/>
    <property type="match status" value="1"/>
</dbReference>
<dbReference type="InterPro" id="IPR001018">
    <property type="entry name" value="Beta-lactamase_class-B_CS"/>
</dbReference>
<dbReference type="InterPro" id="IPR001279">
    <property type="entry name" value="Metallo-B-lactamas"/>
</dbReference>
<dbReference type="InterPro" id="IPR050855">
    <property type="entry name" value="NDM-1-like"/>
</dbReference>
<dbReference type="InterPro" id="IPR036866">
    <property type="entry name" value="RibonucZ/Hydroxyglut_hydro"/>
</dbReference>
<dbReference type="NCBIfam" id="NF000329">
    <property type="entry name" value="bla_B2_CphA"/>
    <property type="match status" value="1"/>
</dbReference>
<dbReference type="NCBIfam" id="NF012229">
    <property type="entry name" value="bla_class_B_core"/>
    <property type="match status" value="1"/>
</dbReference>
<dbReference type="NCBIfam" id="NF033087">
    <property type="entry name" value="bla_subclass_B2"/>
    <property type="match status" value="1"/>
</dbReference>
<dbReference type="PANTHER" id="PTHR42951:SF4">
    <property type="entry name" value="ACYL-COENZYME A THIOESTERASE MBLAC2"/>
    <property type="match status" value="1"/>
</dbReference>
<dbReference type="PANTHER" id="PTHR42951">
    <property type="entry name" value="METALLO-BETA-LACTAMASE DOMAIN-CONTAINING"/>
    <property type="match status" value="1"/>
</dbReference>
<dbReference type="Pfam" id="PF00753">
    <property type="entry name" value="Lactamase_B"/>
    <property type="match status" value="1"/>
</dbReference>
<dbReference type="SMART" id="SM00849">
    <property type="entry name" value="Lactamase_B"/>
    <property type="match status" value="1"/>
</dbReference>
<dbReference type="SUPFAM" id="SSF56281">
    <property type="entry name" value="Metallo-hydrolase/oxidoreductase"/>
    <property type="match status" value="1"/>
</dbReference>
<dbReference type="PROSITE" id="PS00743">
    <property type="entry name" value="BETA_LACTAMASE_B_1"/>
    <property type="match status" value="1"/>
</dbReference>
<dbReference type="PROSITE" id="PS00744">
    <property type="entry name" value="BETA_LACTAMASE_B_2"/>
    <property type="match status" value="1"/>
</dbReference>
<gene>
    <name evidence="9" type="primary">cphA</name>
</gene>
<evidence type="ECO:0000255" key="1"/>
<evidence type="ECO:0000269" key="2">
    <source>
    </source>
</evidence>
<evidence type="ECO:0000269" key="3">
    <source>
    </source>
</evidence>
<evidence type="ECO:0000269" key="4">
    <source>
    </source>
</evidence>
<evidence type="ECO:0000269" key="5">
    <source>
    </source>
</evidence>
<evidence type="ECO:0000269" key="6">
    <source>
    </source>
</evidence>
<evidence type="ECO:0000269" key="7">
    <source>
    </source>
</evidence>
<evidence type="ECO:0000269" key="8">
    <source>
    </source>
</evidence>
<evidence type="ECO:0000303" key="9">
    <source>
    </source>
</evidence>
<evidence type="ECO:0000305" key="10"/>
<evidence type="ECO:0000305" key="11">
    <source>
    </source>
</evidence>
<evidence type="ECO:0007829" key="12">
    <source>
        <dbReference type="PDB" id="3IOG"/>
    </source>
</evidence>
<evidence type="ECO:0007829" key="13">
    <source>
        <dbReference type="PDB" id="3SW3"/>
    </source>
</evidence>
<reference key="1">
    <citation type="journal article" date="1991" name="J. Bacteriol.">
        <title>The Aeromonas hydrophila cphA gene: molecular heterogeneity among class B metallo-beta-lactamases.</title>
        <authorList>
            <person name="Massidda O."/>
            <person name="Rossolini G.M."/>
            <person name="Satta G."/>
        </authorList>
    </citation>
    <scope>NUCLEOTIDE SEQUENCE [GENOMIC DNA]</scope>
    <scope>FUNCTION</scope>
    <scope>ACTIVITY REGULATION</scope>
    <scope>SUBSTRATE SPECIFICITY</scope>
    <scope>SUBUNIT</scope>
    <source>
        <strain>AE036</strain>
    </source>
</reference>
<reference key="2">
    <citation type="journal article" date="1990" name="Antimicrob. Agents Chemother.">
        <title>Purification and characterization of inducible beta-lactamases in Aeromonas spp.</title>
        <authorList>
            <person name="Iaconis J.P."/>
            <person name="Sanders C.C."/>
        </authorList>
    </citation>
    <scope>FUNCTION</scope>
    <scope>CATALYTIC ACTIVITY</scope>
    <scope>BIOPHYSICOCHEMICAL PROPERTIES</scope>
    <scope>ACTIVITY REGULATION</scope>
    <scope>INDUCTION</scope>
    <scope>SUBUNIT</scope>
    <scope>SUBSTRATE SPECIFICITY</scope>
</reference>
<reference key="3">
    <citation type="journal article" date="2005" name="J. Mol. Biol.">
        <title>A metallo-beta-lactamase enzyme in action: crystal structures of the monozinc carbapenemase CphA and its complex with biapenem.</title>
        <authorList>
            <person name="Garau G."/>
            <person name="Bebrone C."/>
            <person name="Anne C."/>
            <person name="Galleni M."/>
            <person name="Frere J.M."/>
            <person name="Dideberg O."/>
        </authorList>
    </citation>
    <scope>X-RAY CRYSTALLOGRAPHY (1.60 ANGSTROMS) OF 28-254 OF WILD-TYPE AND MUTANT GLY-192 IN COMPLEX WITH SUBSTRATE ANALOGS AND ZINC IONS</scope>
    <scope>FUNCTION</scope>
    <scope>CATALYTIC ACTIVITY</scope>
    <scope>BIOPHYSICOCHEMICAL PROPERTIES</scope>
    <scope>MUTAGENESIS OF ASN-192</scope>
    <scope>COFACTOR</scope>
    <scope>SUBUNIT</scope>
    <scope>REACTION MECHANISM</scope>
</reference>
<reference key="4">
    <citation type="journal article" date="2007" name="Antimicrob. Agents Chemother.">
        <title>Competitive inhibitors of the CphA metallo-beta-lactamase from Aeromonas hydrophila.</title>
        <authorList>
            <person name="Horsfall L.E."/>
            <person name="Garau G."/>
            <person name="Lienard B.M."/>
            <person name="Dideberg O."/>
            <person name="Schofield C.J."/>
            <person name="Frere J.M."/>
            <person name="Galleni M."/>
        </authorList>
    </citation>
    <scope>X-RAY CRYSTALLOGRAPHY (1.86 ANGSTROMS) OF 28-254 IN COMPLEX WITH SUBSTRATE ANALOG AND ZINC IONS</scope>
    <scope>FUNCTION</scope>
    <scope>CATALYTIC ACTIVITY</scope>
    <scope>BIOPHYSICOCHEMICAL PROPERTIES</scope>
    <scope>ACTIVITY REGULATION</scope>
    <scope>MUTAGENESIS OF ASN-93 AND ASN-192</scope>
    <scope>COFACTOR</scope>
</reference>
<reference key="5">
    <citation type="journal article" date="2008" name="Org. Biomol. Chem.">
        <title>Structural basis for the broad-spectrum inhibition of metallo-beta-lactamases by thiols.</title>
        <authorList>
            <person name="Lienard B.M."/>
            <person name="Garau G."/>
            <person name="Horsfall L."/>
            <person name="Karsisiotis A.I."/>
            <person name="Damblon C."/>
            <person name="Lassaux P."/>
            <person name="Papamicael C."/>
            <person name="Roberts G.C."/>
            <person name="Galleni M."/>
            <person name="Dideberg O."/>
            <person name="Frere J.M."/>
            <person name="Schofield C.J."/>
        </authorList>
    </citation>
    <scope>X-RAY CRYSTALLOGRAPHY (1.66 ANGSTROMS) OF 28-254 IN COMPLEX WITH SUBSTRATE ANALOG AND ZINC IONS</scope>
    <scope>COFACTOR</scope>
</reference>
<reference key="6">
    <citation type="journal article" date="2009" name="Antimicrob. Agents Chemother.">
        <title>The structure of the dizinc subclass B2 metallo-beta-lactamase CphA reveals that the second inhibitory zinc ion binds in the histidine site.</title>
        <authorList>
            <person name="Bebrone C."/>
            <person name="Delbruck H."/>
            <person name="Kupper M.B."/>
            <person name="Schlomer P."/>
            <person name="Willmann C."/>
            <person name="Frere J.M."/>
            <person name="Fischer R."/>
            <person name="Galleni M."/>
            <person name="Hoffmann K.M."/>
        </authorList>
    </citation>
    <scope>X-RAY CRYSTALLOGRAPHY (1.70 ANGSTROMS) OF 28-254 OF WILD-TYPE AND MUTANT GLY-192 IN COMPLEX WITH SUBSTRATE ANALOGS AND ZINC IONS</scope>
    <scope>FUNCTION</scope>
    <scope>CATALYTIC ACTIVITY</scope>
    <scope>BIOPHYSICOCHEMICAL PROPERTIES</scope>
    <scope>MUTAGENESIS OF ASN-192</scope>
    <scope>ACTIVITY REGULATION</scope>
    <scope>COFACTOR</scope>
</reference>
<reference key="7">
    <citation type="journal article" date="2010" name="J. Med. Chem.">
        <title>Mercaptophosphonate compounds as broad-spectrum inhibitors of the metallo-beta-lactamases.</title>
        <authorList>
            <person name="Lassaux P."/>
            <person name="Hamel M."/>
            <person name="Gulea M."/>
            <person name="Delbruck H."/>
            <person name="Mercuri P.S."/>
            <person name="Horsfall L."/>
            <person name="Dehareng D."/>
            <person name="Kupper M."/>
            <person name="Frere J.M."/>
            <person name="Hoffmann K."/>
            <person name="Galleni M."/>
            <person name="Bebrone C."/>
        </authorList>
    </citation>
    <scope>X-RAY CRYSTALLOGRAPHY (1.41 ANGSTROMS) OF 28-254 IN COMPLEX WITH SUBSTRATE ANALOGS AND ZINC IONS</scope>
    <scope>ACTIVITY REGULATION</scope>
    <scope>COFACTOR</scope>
</reference>
<reference key="8">
    <citation type="submission" date="2011-08" db="PDB data bank">
        <title>Crystal structure of mutant C221D of carbapenemase CphA from Aeromonas hydrophila.</title>
        <authorList>
            <person name="Delbruck H."/>
            <person name="Bebrone C."/>
            <person name="Hoffmann K.M.V."/>
            <person name="Galleni M."/>
        </authorList>
    </citation>
    <scope>X-RAY CRYSTALLOGRAPHY (2.03 ANGSTROMS) OF 28-254</scope>
</reference>
<accession>P26918</accession>
<sequence>MMKGWMKCGLAGAVVLMASFWGGSVRAAGMSLTQVSGPVYVVEDNYYVQENSMVYFGAKGVTVVGATWTPDTARELHKLIKRVSRKPVLEVINTNYHTDRAGGNAYWKSIGAKVVSTRQTRDLMKSDWAEIVAFTRKGLPEYPDLPLVLPNVVHDGDFTLQEGKVRAFYAGPAHTPDGIFVYFPDEQVLYGNCILKEKLGNLSFADVKAYPQTLERLKAMKLPIKTVIGGHDSPLHGPELIDHYEALIKAAPQS</sequence>
<protein>
    <recommendedName>
        <fullName evidence="10">Metallo-beta-lactamase type 2</fullName>
        <ecNumber evidence="2 3 6 8">3.5.2.6</ecNumber>
    </recommendedName>
    <alternativeName>
        <fullName evidence="10">B2 metallo-beta-lactamase</fullName>
    </alternativeName>
    <alternativeName>
        <fullName evidence="9">Beta-lactamase II</fullName>
    </alternativeName>
    <alternativeName>
        <fullName evidence="9">Carbapenem-hydrolyzing metallo-beta-lactamase</fullName>
    </alternativeName>
    <alternativeName>
        <fullName evidence="9">Metallo-beta-lactamase type II</fullName>
    </alternativeName>
</protein>
<name>BLAB_AERHY</name>
<feature type="signal peptide" evidence="1">
    <location>
        <begin position="1"/>
        <end position="27"/>
    </location>
</feature>
<feature type="chain" id="PRO_0000016941" description="Metallo-beta-lactamase type 2">
    <location>
        <begin position="28"/>
        <end position="254"/>
    </location>
</feature>
<feature type="binding site" evidence="2 3 5 6 7">
    <location>
        <position position="99"/>
    </location>
    <ligand>
        <name>Zn(2+)</name>
        <dbReference type="ChEBI" id="CHEBI:29105"/>
    </ligand>
</feature>
<feature type="binding site" evidence="2">
    <location>
        <position position="135"/>
    </location>
    <ligand>
        <name>substrate</name>
    </ligand>
</feature>
<feature type="binding site" evidence="2 5 7">
    <location>
        <position position="174"/>
    </location>
    <ligand>
        <name>substrate</name>
    </ligand>
</feature>
<feature type="binding site" evidence="2 3 5 6 7">
    <location>
        <position position="193"/>
    </location>
    <ligand>
        <name>Zn(2+)</name>
        <dbReference type="ChEBI" id="CHEBI:29105"/>
    </ligand>
</feature>
<feature type="binding site" evidence="2 3 7">
    <location>
        <position position="196"/>
    </location>
    <ligand>
        <name>substrate</name>
    </ligand>
</feature>
<feature type="binding site" evidence="2 3 5">
    <location>
        <position position="201"/>
    </location>
    <ligand>
        <name>substrate</name>
    </ligand>
</feature>
<feature type="binding site" evidence="2 3 5 6 7">
    <location>
        <position position="231"/>
    </location>
    <ligand>
        <name>Zn(2+)</name>
        <dbReference type="ChEBI" id="CHEBI:29105"/>
    </ligand>
</feature>
<feature type="mutagenesis site" description="Behaves as B1 and B3 enzymes, which are more inhibited by 2-picolinic acid than by 2,4-PDCA; when associated with G-192." evidence="3">
    <original>N</original>
    <variation>H</variation>
    <location>
        <position position="93"/>
    </location>
</feature>
<feature type="mutagenesis site" description="Slight decrease of the catalytic efficiency and slight increase of the affinity for both biapenem and imipenem. Behaves as B1 and B3 enzymes, which are more inhibited by 2-picolinic acid than by 2,4-PDCA; when associated with H-93." evidence="2 3 6">
    <original>N</original>
    <variation>G</variation>
    <location>
        <position position="192"/>
    </location>
</feature>
<feature type="strand" evidence="12">
    <location>
        <begin position="30"/>
        <end position="36"/>
    </location>
</feature>
<feature type="strand" evidence="12">
    <location>
        <begin position="39"/>
        <end position="44"/>
    </location>
</feature>
<feature type="strand" evidence="12">
    <location>
        <begin position="46"/>
        <end position="48"/>
    </location>
</feature>
<feature type="strand" evidence="12">
    <location>
        <begin position="50"/>
        <end position="56"/>
    </location>
</feature>
<feature type="strand" evidence="12">
    <location>
        <begin position="61"/>
        <end position="65"/>
    </location>
</feature>
<feature type="helix" evidence="12">
    <location>
        <begin position="70"/>
        <end position="81"/>
    </location>
</feature>
<feature type="strand" evidence="12">
    <location>
        <begin position="88"/>
        <end position="92"/>
    </location>
</feature>
<feature type="strand" evidence="12">
    <location>
        <begin position="94"/>
        <end position="97"/>
    </location>
</feature>
<feature type="helix" evidence="12">
    <location>
        <begin position="98"/>
        <end position="101"/>
    </location>
</feature>
<feature type="helix" evidence="12">
    <location>
        <begin position="104"/>
        <end position="109"/>
    </location>
</feature>
<feature type="strand" evidence="12">
    <location>
        <begin position="113"/>
        <end position="117"/>
    </location>
</feature>
<feature type="helix" evidence="12">
    <location>
        <begin position="118"/>
        <end position="138"/>
    </location>
</feature>
<feature type="strand" evidence="12">
    <location>
        <begin position="151"/>
        <end position="156"/>
    </location>
</feature>
<feature type="strand" evidence="12">
    <location>
        <begin position="158"/>
        <end position="160"/>
    </location>
</feature>
<feature type="turn" evidence="12">
    <location>
        <begin position="161"/>
        <end position="164"/>
    </location>
</feature>
<feature type="strand" evidence="12">
    <location>
        <begin position="165"/>
        <end position="168"/>
    </location>
</feature>
<feature type="strand" evidence="12">
    <location>
        <begin position="173"/>
        <end position="177"/>
    </location>
</feature>
<feature type="strand" evidence="12">
    <location>
        <begin position="180"/>
        <end position="183"/>
    </location>
</feature>
<feature type="turn" evidence="12">
    <location>
        <begin position="184"/>
        <end position="187"/>
    </location>
</feature>
<feature type="strand" evidence="12">
    <location>
        <begin position="188"/>
        <end position="190"/>
    </location>
</feature>
<feature type="helix" evidence="12">
    <location>
        <begin position="192"/>
        <end position="194"/>
    </location>
</feature>
<feature type="strand" evidence="13">
    <location>
        <begin position="198"/>
        <end position="200"/>
    </location>
</feature>
<feature type="helix" evidence="12">
    <location>
        <begin position="209"/>
        <end position="219"/>
    </location>
</feature>
<feature type="strand" evidence="12">
    <location>
        <begin position="225"/>
        <end position="228"/>
    </location>
</feature>
<feature type="strand" evidence="12">
    <location>
        <begin position="230"/>
        <end position="232"/>
    </location>
</feature>
<feature type="helix" evidence="12">
    <location>
        <begin position="239"/>
        <end position="250"/>
    </location>
</feature>
<organism>
    <name type="scientific">Aeromonas hydrophila</name>
    <dbReference type="NCBI Taxonomy" id="644"/>
    <lineage>
        <taxon>Bacteria</taxon>
        <taxon>Pseudomonadati</taxon>
        <taxon>Pseudomonadota</taxon>
        <taxon>Gammaproteobacteria</taxon>
        <taxon>Aeromonadales</taxon>
        <taxon>Aeromonadaceae</taxon>
        <taxon>Aeromonas</taxon>
    </lineage>
</organism>